<dbReference type="EC" id="4.2.3.5" evidence="1"/>
<dbReference type="EMBL" id="CP000323">
    <property type="protein sequence ID" value="ABE75412.1"/>
    <property type="molecule type" value="Genomic_DNA"/>
</dbReference>
<dbReference type="RefSeq" id="WP_011513961.1">
    <property type="nucleotide sequence ID" value="NC_007969.1"/>
</dbReference>
<dbReference type="SMR" id="Q1QA91"/>
<dbReference type="STRING" id="335284.Pcryo_1635"/>
<dbReference type="KEGG" id="pcr:Pcryo_1635"/>
<dbReference type="eggNOG" id="COG0082">
    <property type="taxonomic scope" value="Bacteria"/>
</dbReference>
<dbReference type="HOGENOM" id="CLU_034547_0_2_6"/>
<dbReference type="UniPathway" id="UPA00053">
    <property type="reaction ID" value="UER00090"/>
</dbReference>
<dbReference type="Proteomes" id="UP000002425">
    <property type="component" value="Chromosome"/>
</dbReference>
<dbReference type="GO" id="GO:0005829">
    <property type="term" value="C:cytosol"/>
    <property type="evidence" value="ECO:0007669"/>
    <property type="project" value="TreeGrafter"/>
</dbReference>
<dbReference type="GO" id="GO:0004107">
    <property type="term" value="F:chorismate synthase activity"/>
    <property type="evidence" value="ECO:0007669"/>
    <property type="project" value="UniProtKB-UniRule"/>
</dbReference>
<dbReference type="GO" id="GO:0010181">
    <property type="term" value="F:FMN binding"/>
    <property type="evidence" value="ECO:0007669"/>
    <property type="project" value="TreeGrafter"/>
</dbReference>
<dbReference type="GO" id="GO:0008652">
    <property type="term" value="P:amino acid biosynthetic process"/>
    <property type="evidence" value="ECO:0007669"/>
    <property type="project" value="UniProtKB-KW"/>
</dbReference>
<dbReference type="GO" id="GO:0009073">
    <property type="term" value="P:aromatic amino acid family biosynthetic process"/>
    <property type="evidence" value="ECO:0007669"/>
    <property type="project" value="UniProtKB-KW"/>
</dbReference>
<dbReference type="GO" id="GO:0009423">
    <property type="term" value="P:chorismate biosynthetic process"/>
    <property type="evidence" value="ECO:0007669"/>
    <property type="project" value="UniProtKB-UniRule"/>
</dbReference>
<dbReference type="CDD" id="cd07304">
    <property type="entry name" value="Chorismate_synthase"/>
    <property type="match status" value="1"/>
</dbReference>
<dbReference type="FunFam" id="3.60.150.10:FF:000001">
    <property type="entry name" value="Chorismate synthase"/>
    <property type="match status" value="1"/>
</dbReference>
<dbReference type="Gene3D" id="3.60.150.10">
    <property type="entry name" value="Chorismate synthase AroC"/>
    <property type="match status" value="1"/>
</dbReference>
<dbReference type="HAMAP" id="MF_00300">
    <property type="entry name" value="Chorismate_synth"/>
    <property type="match status" value="1"/>
</dbReference>
<dbReference type="InterPro" id="IPR000453">
    <property type="entry name" value="Chorismate_synth"/>
</dbReference>
<dbReference type="InterPro" id="IPR035904">
    <property type="entry name" value="Chorismate_synth_AroC_sf"/>
</dbReference>
<dbReference type="InterPro" id="IPR020541">
    <property type="entry name" value="Chorismate_synthase_CS"/>
</dbReference>
<dbReference type="NCBIfam" id="TIGR00033">
    <property type="entry name" value="aroC"/>
    <property type="match status" value="1"/>
</dbReference>
<dbReference type="NCBIfam" id="NF003793">
    <property type="entry name" value="PRK05382.1"/>
    <property type="match status" value="1"/>
</dbReference>
<dbReference type="PANTHER" id="PTHR21085">
    <property type="entry name" value="CHORISMATE SYNTHASE"/>
    <property type="match status" value="1"/>
</dbReference>
<dbReference type="PANTHER" id="PTHR21085:SF0">
    <property type="entry name" value="CHORISMATE SYNTHASE"/>
    <property type="match status" value="1"/>
</dbReference>
<dbReference type="Pfam" id="PF01264">
    <property type="entry name" value="Chorismate_synt"/>
    <property type="match status" value="1"/>
</dbReference>
<dbReference type="PIRSF" id="PIRSF001456">
    <property type="entry name" value="Chorismate_synth"/>
    <property type="match status" value="1"/>
</dbReference>
<dbReference type="SUPFAM" id="SSF103263">
    <property type="entry name" value="Chorismate synthase, AroC"/>
    <property type="match status" value="1"/>
</dbReference>
<dbReference type="PROSITE" id="PS00787">
    <property type="entry name" value="CHORISMATE_SYNTHASE_1"/>
    <property type="match status" value="1"/>
</dbReference>
<dbReference type="PROSITE" id="PS00788">
    <property type="entry name" value="CHORISMATE_SYNTHASE_2"/>
    <property type="match status" value="1"/>
</dbReference>
<dbReference type="PROSITE" id="PS00789">
    <property type="entry name" value="CHORISMATE_SYNTHASE_3"/>
    <property type="match status" value="1"/>
</dbReference>
<feature type="chain" id="PRO_0000256321" description="Chorismate synthase">
    <location>
        <begin position="1"/>
        <end position="367"/>
    </location>
</feature>
<feature type="binding site" evidence="1">
    <location>
        <position position="48"/>
    </location>
    <ligand>
        <name>NADP(+)</name>
        <dbReference type="ChEBI" id="CHEBI:58349"/>
    </ligand>
</feature>
<feature type="binding site" evidence="1">
    <location>
        <begin position="125"/>
        <end position="127"/>
    </location>
    <ligand>
        <name>FMN</name>
        <dbReference type="ChEBI" id="CHEBI:58210"/>
    </ligand>
</feature>
<feature type="binding site" evidence="1">
    <location>
        <begin position="243"/>
        <end position="244"/>
    </location>
    <ligand>
        <name>FMN</name>
        <dbReference type="ChEBI" id="CHEBI:58210"/>
    </ligand>
</feature>
<feature type="binding site" evidence="1">
    <location>
        <position position="283"/>
    </location>
    <ligand>
        <name>FMN</name>
        <dbReference type="ChEBI" id="CHEBI:58210"/>
    </ligand>
</feature>
<feature type="binding site" evidence="1">
    <location>
        <begin position="298"/>
        <end position="302"/>
    </location>
    <ligand>
        <name>FMN</name>
        <dbReference type="ChEBI" id="CHEBI:58210"/>
    </ligand>
</feature>
<feature type="binding site" evidence="1">
    <location>
        <position position="324"/>
    </location>
    <ligand>
        <name>FMN</name>
        <dbReference type="ChEBI" id="CHEBI:58210"/>
    </ligand>
</feature>
<proteinExistence type="inferred from homology"/>
<accession>Q1QA91</accession>
<gene>
    <name evidence="1" type="primary">aroC</name>
    <name type="ordered locus">Pcryo_1635</name>
</gene>
<organism>
    <name type="scientific">Psychrobacter cryohalolentis (strain ATCC BAA-1226 / DSM 17306 / VKM B-2378 / K5)</name>
    <dbReference type="NCBI Taxonomy" id="335284"/>
    <lineage>
        <taxon>Bacteria</taxon>
        <taxon>Pseudomonadati</taxon>
        <taxon>Pseudomonadota</taxon>
        <taxon>Gammaproteobacteria</taxon>
        <taxon>Moraxellales</taxon>
        <taxon>Moraxellaceae</taxon>
        <taxon>Psychrobacter</taxon>
    </lineage>
</organism>
<protein>
    <recommendedName>
        <fullName evidence="1">Chorismate synthase</fullName>
        <shortName evidence="1">CS</shortName>
        <ecNumber evidence="1">4.2.3.5</ecNumber>
    </recommendedName>
    <alternativeName>
        <fullName evidence="1">5-enolpyruvylshikimate-3-phosphate phospholyase</fullName>
    </alternativeName>
</protein>
<name>AROC_PSYCK</name>
<keyword id="KW-0028">Amino-acid biosynthesis</keyword>
<keyword id="KW-0057">Aromatic amino acid biosynthesis</keyword>
<keyword id="KW-0274">FAD</keyword>
<keyword id="KW-0285">Flavoprotein</keyword>
<keyword id="KW-0288">FMN</keyword>
<keyword id="KW-0456">Lyase</keyword>
<keyword id="KW-0521">NADP</keyword>
<sequence length="367" mass="39191">MAGNSIGQVFTVTTCGESHGAGLLAIVDGVPPGLALSEADLQIDLDRRKPGTSKYSTQRRESDEVEIISGVFEGKTTGTSIGLLIRNTNQKSKDYGEIKDTFRPGHADYTYSMKYGFRDYRGGGRSSARETAMRVAAGAIAKKYLLERLGVQIRGHVTQIGHEYSDVLNSSTIDWDFVNSNPFFCADADAVSRFETLIDSLRREGTSCGARLEIIASGVPVGLGEPVFDRLDADIAHAMMSINAVKGVEIGDGMAVAGQFGHSSRDEMTPDGFTANHAGGILGGISSGQDIRVSIALKPTSSITTAGKSINTEGEAIEMLTKGRHDPCVGVRATPIAEAMLAIVLLDHYLRHRGQNADIKQPVQSIT</sequence>
<comment type="function">
    <text evidence="1">Catalyzes the anti-1,4-elimination of the C-3 phosphate and the C-6 proR hydrogen from 5-enolpyruvylshikimate-3-phosphate (EPSP) to yield chorismate, which is the branch point compound that serves as the starting substrate for the three terminal pathways of aromatic amino acid biosynthesis. This reaction introduces a second double bond into the aromatic ring system.</text>
</comment>
<comment type="catalytic activity">
    <reaction evidence="1">
        <text>5-O-(1-carboxyvinyl)-3-phosphoshikimate = chorismate + phosphate</text>
        <dbReference type="Rhea" id="RHEA:21020"/>
        <dbReference type="ChEBI" id="CHEBI:29748"/>
        <dbReference type="ChEBI" id="CHEBI:43474"/>
        <dbReference type="ChEBI" id="CHEBI:57701"/>
        <dbReference type="EC" id="4.2.3.5"/>
    </reaction>
</comment>
<comment type="cofactor">
    <cofactor evidence="1">
        <name>FMNH2</name>
        <dbReference type="ChEBI" id="CHEBI:57618"/>
    </cofactor>
    <text evidence="1">Reduced FMN (FMNH(2)).</text>
</comment>
<comment type="pathway">
    <text evidence="1">Metabolic intermediate biosynthesis; chorismate biosynthesis; chorismate from D-erythrose 4-phosphate and phosphoenolpyruvate: step 7/7.</text>
</comment>
<comment type="subunit">
    <text evidence="1">Homotetramer.</text>
</comment>
<comment type="similarity">
    <text evidence="1">Belongs to the chorismate synthase family.</text>
</comment>
<evidence type="ECO:0000255" key="1">
    <source>
        <dbReference type="HAMAP-Rule" id="MF_00300"/>
    </source>
</evidence>
<reference key="1">
    <citation type="submission" date="2006-03" db="EMBL/GenBank/DDBJ databases">
        <title>Complete sequence of chromosome of Psychrobacter cryohalolentis K5.</title>
        <authorList>
            <consortium name="US DOE Joint Genome Institute"/>
            <person name="Copeland A."/>
            <person name="Lucas S."/>
            <person name="Lapidus A."/>
            <person name="Barry K."/>
            <person name="Detter J.C."/>
            <person name="Glavina T."/>
            <person name="Hammon N."/>
            <person name="Israni S."/>
            <person name="Dalin E."/>
            <person name="Tice H."/>
            <person name="Pitluck S."/>
            <person name="Brettin T."/>
            <person name="Bruce D."/>
            <person name="Han C."/>
            <person name="Tapia R."/>
            <person name="Sims D.R."/>
            <person name="Gilna P."/>
            <person name="Schmutz J."/>
            <person name="Larimer F."/>
            <person name="Land M."/>
            <person name="Hauser L."/>
            <person name="Kyrpides N."/>
            <person name="Kim E."/>
            <person name="Richardson P."/>
        </authorList>
    </citation>
    <scope>NUCLEOTIDE SEQUENCE [LARGE SCALE GENOMIC DNA]</scope>
    <source>
        <strain>ATCC BAA-1226 / DSM 17306 / VKM B-2378 / K5</strain>
    </source>
</reference>